<feature type="chain" id="PRO_0000129976" description="Small ribosomal subunit protein uS19c">
    <location>
        <begin position="1"/>
        <end position="93"/>
    </location>
</feature>
<reference key="1">
    <citation type="journal article" date="2004" name="Gene">
        <title>The complete nucleotide sequence of wild rice (Oryza nivara) chloroplast genome: first genome wide comparative sequence analysis of wild and cultivated rice.</title>
        <authorList>
            <person name="Masood M.S."/>
            <person name="Nishikawa T."/>
            <person name="Fukuoka S."/>
            <person name="Njenga P.K."/>
            <person name="Tsudzuki T."/>
            <person name="Kadowaki K."/>
        </authorList>
    </citation>
    <scope>NUCLEOTIDE SEQUENCE [LARGE SCALE GENOMIC DNA]</scope>
    <source>
        <strain evidence="3">cv. SL10</strain>
    </source>
</reference>
<accession>Q6EN80</accession>
<protein>
    <recommendedName>
        <fullName evidence="1">Small ribosomal subunit protein uS19c</fullName>
    </recommendedName>
    <alternativeName>
        <fullName evidence="2">30S ribosomal protein S19, chloroplastic</fullName>
    </alternativeName>
</protein>
<evidence type="ECO:0000255" key="1">
    <source>
        <dbReference type="HAMAP-Rule" id="MF_00531"/>
    </source>
</evidence>
<evidence type="ECO:0000305" key="2"/>
<evidence type="ECO:0000312" key="3">
    <source>
        <dbReference type="Proteomes" id="UP000006591"/>
    </source>
</evidence>
<geneLocation type="chloroplast"/>
<name>RR19_ORYNI</name>
<sequence length="93" mass="10695">MTRKKTNPFVAHHLLAKIEKVNMKEEKETIVTWSRASSILPAMVGHTIAIHNGKEHIPIYITNPMVGRKLGEFVPTRHFTSYESARKDTKSRR</sequence>
<proteinExistence type="inferred from homology"/>
<dbReference type="EMBL" id="AP006728">
    <property type="protein sequence ID" value="BAD26872.1"/>
    <property type="molecule type" value="Genomic_DNA"/>
</dbReference>
<dbReference type="EMBL" id="AP006728">
    <property type="protein sequence ID" value="BAD26819.1"/>
    <property type="molecule type" value="Genomic_DNA"/>
</dbReference>
<dbReference type="SMR" id="Q6EN80"/>
<dbReference type="STRING" id="4536.Q6EN80"/>
<dbReference type="Proteomes" id="UP000006591">
    <property type="component" value="Chloroplast"/>
</dbReference>
<dbReference type="GO" id="GO:0009507">
    <property type="term" value="C:chloroplast"/>
    <property type="evidence" value="ECO:0007669"/>
    <property type="project" value="UniProtKB-SubCell"/>
</dbReference>
<dbReference type="GO" id="GO:0005763">
    <property type="term" value="C:mitochondrial small ribosomal subunit"/>
    <property type="evidence" value="ECO:0007669"/>
    <property type="project" value="TreeGrafter"/>
</dbReference>
<dbReference type="GO" id="GO:0009536">
    <property type="term" value="C:plastid"/>
    <property type="evidence" value="ECO:0000305"/>
    <property type="project" value="Gramene"/>
</dbReference>
<dbReference type="GO" id="GO:0019843">
    <property type="term" value="F:rRNA binding"/>
    <property type="evidence" value="ECO:0007669"/>
    <property type="project" value="UniProtKB-UniRule"/>
</dbReference>
<dbReference type="GO" id="GO:0003735">
    <property type="term" value="F:structural constituent of ribosome"/>
    <property type="evidence" value="ECO:0007669"/>
    <property type="project" value="InterPro"/>
</dbReference>
<dbReference type="GO" id="GO:0000028">
    <property type="term" value="P:ribosomal small subunit assembly"/>
    <property type="evidence" value="ECO:0007669"/>
    <property type="project" value="TreeGrafter"/>
</dbReference>
<dbReference type="GO" id="GO:0006412">
    <property type="term" value="P:translation"/>
    <property type="evidence" value="ECO:0007669"/>
    <property type="project" value="UniProtKB-UniRule"/>
</dbReference>
<dbReference type="FunFam" id="3.30.860.10:FF:000001">
    <property type="entry name" value="30S ribosomal protein S19"/>
    <property type="match status" value="1"/>
</dbReference>
<dbReference type="Gene3D" id="3.30.860.10">
    <property type="entry name" value="30s Ribosomal Protein S19, Chain A"/>
    <property type="match status" value="1"/>
</dbReference>
<dbReference type="HAMAP" id="MF_00531">
    <property type="entry name" value="Ribosomal_uS19"/>
    <property type="match status" value="1"/>
</dbReference>
<dbReference type="InterPro" id="IPR002222">
    <property type="entry name" value="Ribosomal_uS19"/>
</dbReference>
<dbReference type="InterPro" id="IPR005732">
    <property type="entry name" value="Ribosomal_uS19_bac-type"/>
</dbReference>
<dbReference type="InterPro" id="IPR020934">
    <property type="entry name" value="Ribosomal_uS19_CS"/>
</dbReference>
<dbReference type="InterPro" id="IPR023575">
    <property type="entry name" value="Ribosomal_uS19_SF"/>
</dbReference>
<dbReference type="NCBIfam" id="TIGR01050">
    <property type="entry name" value="rpsS_bact"/>
    <property type="match status" value="1"/>
</dbReference>
<dbReference type="PANTHER" id="PTHR11880">
    <property type="entry name" value="RIBOSOMAL PROTEIN S19P FAMILY MEMBER"/>
    <property type="match status" value="1"/>
</dbReference>
<dbReference type="PANTHER" id="PTHR11880:SF8">
    <property type="entry name" value="SMALL RIBOSOMAL SUBUNIT PROTEIN US19M"/>
    <property type="match status" value="1"/>
</dbReference>
<dbReference type="Pfam" id="PF00203">
    <property type="entry name" value="Ribosomal_S19"/>
    <property type="match status" value="1"/>
</dbReference>
<dbReference type="PIRSF" id="PIRSF002144">
    <property type="entry name" value="Ribosomal_S19"/>
    <property type="match status" value="1"/>
</dbReference>
<dbReference type="PRINTS" id="PR00975">
    <property type="entry name" value="RIBOSOMALS19"/>
</dbReference>
<dbReference type="SUPFAM" id="SSF54570">
    <property type="entry name" value="Ribosomal protein S19"/>
    <property type="match status" value="1"/>
</dbReference>
<dbReference type="PROSITE" id="PS00323">
    <property type="entry name" value="RIBOSOMAL_S19"/>
    <property type="match status" value="1"/>
</dbReference>
<organism>
    <name type="scientific">Oryza nivara</name>
    <name type="common">Indian wild rice</name>
    <name type="synonym">Oryza sativa f. spontanea</name>
    <dbReference type="NCBI Taxonomy" id="4536"/>
    <lineage>
        <taxon>Eukaryota</taxon>
        <taxon>Viridiplantae</taxon>
        <taxon>Streptophyta</taxon>
        <taxon>Embryophyta</taxon>
        <taxon>Tracheophyta</taxon>
        <taxon>Spermatophyta</taxon>
        <taxon>Magnoliopsida</taxon>
        <taxon>Liliopsida</taxon>
        <taxon>Poales</taxon>
        <taxon>Poaceae</taxon>
        <taxon>BOP clade</taxon>
        <taxon>Oryzoideae</taxon>
        <taxon>Oryzeae</taxon>
        <taxon>Oryzinae</taxon>
        <taxon>Oryza</taxon>
    </lineage>
</organism>
<comment type="function">
    <text evidence="1">Protein S19 forms a complex with S13 that binds strongly to the 16S ribosomal RNA.</text>
</comment>
<comment type="subcellular location">
    <subcellularLocation>
        <location>Plastid</location>
        <location>Chloroplast</location>
    </subcellularLocation>
</comment>
<comment type="similarity">
    <text evidence="1">Belongs to the universal ribosomal protein uS19 family.</text>
</comment>
<keyword id="KW-0150">Chloroplast</keyword>
<keyword id="KW-0934">Plastid</keyword>
<keyword id="KW-1185">Reference proteome</keyword>
<keyword id="KW-0687">Ribonucleoprotein</keyword>
<keyword id="KW-0689">Ribosomal protein</keyword>
<keyword id="KW-0694">RNA-binding</keyword>
<keyword id="KW-0699">rRNA-binding</keyword>
<gene>
    <name evidence="1" type="primary">rps19-A</name>
</gene>
<gene>
    <name evidence="1" type="primary">rps19-B</name>
</gene>